<comment type="function">
    <text evidence="1">Catalyzes the condensation of (S)-aspartate-beta-semialdehyde [(S)-ASA] and pyruvate to 4-hydroxy-tetrahydrodipicolinate (HTPA).</text>
</comment>
<comment type="catalytic activity">
    <reaction evidence="1">
        <text>L-aspartate 4-semialdehyde + pyruvate = (2S,4S)-4-hydroxy-2,3,4,5-tetrahydrodipicolinate + H2O + H(+)</text>
        <dbReference type="Rhea" id="RHEA:34171"/>
        <dbReference type="ChEBI" id="CHEBI:15361"/>
        <dbReference type="ChEBI" id="CHEBI:15377"/>
        <dbReference type="ChEBI" id="CHEBI:15378"/>
        <dbReference type="ChEBI" id="CHEBI:67139"/>
        <dbReference type="ChEBI" id="CHEBI:537519"/>
        <dbReference type="EC" id="4.3.3.7"/>
    </reaction>
</comment>
<comment type="pathway">
    <text evidence="1">Amino-acid biosynthesis; L-lysine biosynthesis via DAP pathway; (S)-tetrahydrodipicolinate from L-aspartate: step 3/4.</text>
</comment>
<comment type="subunit">
    <text evidence="1">Homotetramer; dimer of dimers.</text>
</comment>
<comment type="subcellular location">
    <subcellularLocation>
        <location evidence="1">Cytoplasm</location>
    </subcellularLocation>
</comment>
<comment type="similarity">
    <text evidence="1">Belongs to the DapA family.</text>
</comment>
<comment type="caution">
    <text evidence="2">Was originally thought to be a dihydrodipicolinate synthase (DHDPS), catalyzing the condensation of (S)-aspartate-beta-semialdehyde [(S)-ASA] and pyruvate to dihydrodipicolinate (DHDP). However, it was shown in E.coli that the product of the enzymatic reaction is not dihydrodipicolinate but in fact (4S)-4-hydroxy-2,3,4,5-tetrahydro-(2S)-dipicolinic acid (HTPA), and that the consecutive dehydration reaction leading to DHDP is not spontaneous but catalyzed by DapB.</text>
</comment>
<gene>
    <name evidence="1" type="primary">dapA</name>
    <name type="ordered locus">LMHCC_1133</name>
</gene>
<accession>B8DE74</accession>
<reference key="1">
    <citation type="journal article" date="2011" name="J. Bacteriol.">
        <title>Genome sequence of lineage III Listeria monocytogenes strain HCC23.</title>
        <authorList>
            <person name="Steele C.L."/>
            <person name="Donaldson J.R."/>
            <person name="Paul D."/>
            <person name="Banes M.M."/>
            <person name="Arick T."/>
            <person name="Bridges S.M."/>
            <person name="Lawrence M.L."/>
        </authorList>
    </citation>
    <scope>NUCLEOTIDE SEQUENCE [LARGE SCALE GENOMIC DNA]</scope>
    <source>
        <strain>HCC23</strain>
    </source>
</reference>
<dbReference type="EC" id="4.3.3.7" evidence="1"/>
<dbReference type="EMBL" id="CP001175">
    <property type="protein sequence ID" value="ACK39481.1"/>
    <property type="molecule type" value="Genomic_DNA"/>
</dbReference>
<dbReference type="RefSeq" id="WP_003730351.1">
    <property type="nucleotide sequence ID" value="NC_011660.1"/>
</dbReference>
<dbReference type="SMR" id="B8DE74"/>
<dbReference type="KEGG" id="lmh:LMHCC_1133"/>
<dbReference type="HOGENOM" id="CLU_049343_7_1_9"/>
<dbReference type="UniPathway" id="UPA00034">
    <property type="reaction ID" value="UER00017"/>
</dbReference>
<dbReference type="GO" id="GO:0005829">
    <property type="term" value="C:cytosol"/>
    <property type="evidence" value="ECO:0007669"/>
    <property type="project" value="TreeGrafter"/>
</dbReference>
<dbReference type="GO" id="GO:0008840">
    <property type="term" value="F:4-hydroxy-tetrahydrodipicolinate synthase activity"/>
    <property type="evidence" value="ECO:0007669"/>
    <property type="project" value="UniProtKB-UniRule"/>
</dbReference>
<dbReference type="GO" id="GO:0019877">
    <property type="term" value="P:diaminopimelate biosynthetic process"/>
    <property type="evidence" value="ECO:0007669"/>
    <property type="project" value="UniProtKB-UniRule"/>
</dbReference>
<dbReference type="GO" id="GO:0009089">
    <property type="term" value="P:lysine biosynthetic process via diaminopimelate"/>
    <property type="evidence" value="ECO:0007669"/>
    <property type="project" value="UniProtKB-UniRule"/>
</dbReference>
<dbReference type="CDD" id="cd00950">
    <property type="entry name" value="DHDPS"/>
    <property type="match status" value="1"/>
</dbReference>
<dbReference type="Gene3D" id="3.20.20.70">
    <property type="entry name" value="Aldolase class I"/>
    <property type="match status" value="1"/>
</dbReference>
<dbReference type="HAMAP" id="MF_00418">
    <property type="entry name" value="DapA"/>
    <property type="match status" value="1"/>
</dbReference>
<dbReference type="InterPro" id="IPR013785">
    <property type="entry name" value="Aldolase_TIM"/>
</dbReference>
<dbReference type="InterPro" id="IPR005263">
    <property type="entry name" value="DapA"/>
</dbReference>
<dbReference type="InterPro" id="IPR002220">
    <property type="entry name" value="DapA-like"/>
</dbReference>
<dbReference type="InterPro" id="IPR020625">
    <property type="entry name" value="Schiff_base-form_aldolases_AS"/>
</dbReference>
<dbReference type="InterPro" id="IPR020624">
    <property type="entry name" value="Schiff_base-form_aldolases_CS"/>
</dbReference>
<dbReference type="NCBIfam" id="TIGR00674">
    <property type="entry name" value="dapA"/>
    <property type="match status" value="1"/>
</dbReference>
<dbReference type="PANTHER" id="PTHR12128:SF66">
    <property type="entry name" value="4-HYDROXY-2-OXOGLUTARATE ALDOLASE, MITOCHONDRIAL"/>
    <property type="match status" value="1"/>
</dbReference>
<dbReference type="PANTHER" id="PTHR12128">
    <property type="entry name" value="DIHYDRODIPICOLINATE SYNTHASE"/>
    <property type="match status" value="1"/>
</dbReference>
<dbReference type="Pfam" id="PF00701">
    <property type="entry name" value="DHDPS"/>
    <property type="match status" value="1"/>
</dbReference>
<dbReference type="PIRSF" id="PIRSF001365">
    <property type="entry name" value="DHDPS"/>
    <property type="match status" value="1"/>
</dbReference>
<dbReference type="PRINTS" id="PR00146">
    <property type="entry name" value="DHPICSNTHASE"/>
</dbReference>
<dbReference type="SMART" id="SM01130">
    <property type="entry name" value="DHDPS"/>
    <property type="match status" value="1"/>
</dbReference>
<dbReference type="SUPFAM" id="SSF51569">
    <property type="entry name" value="Aldolase"/>
    <property type="match status" value="1"/>
</dbReference>
<dbReference type="PROSITE" id="PS00665">
    <property type="entry name" value="DHDPS_1"/>
    <property type="match status" value="1"/>
</dbReference>
<dbReference type="PROSITE" id="PS00666">
    <property type="entry name" value="DHDPS_2"/>
    <property type="match status" value="1"/>
</dbReference>
<protein>
    <recommendedName>
        <fullName evidence="1">4-hydroxy-tetrahydrodipicolinate synthase</fullName>
        <shortName evidence="1">HTPA synthase</shortName>
        <ecNumber evidence="1">4.3.3.7</ecNumber>
    </recommendedName>
</protein>
<proteinExistence type="inferred from homology"/>
<organism>
    <name type="scientific">Listeria monocytogenes serotype 4a (strain HCC23)</name>
    <dbReference type="NCBI Taxonomy" id="552536"/>
    <lineage>
        <taxon>Bacteria</taxon>
        <taxon>Bacillati</taxon>
        <taxon>Bacillota</taxon>
        <taxon>Bacilli</taxon>
        <taxon>Bacillales</taxon>
        <taxon>Listeriaceae</taxon>
        <taxon>Listeria</taxon>
    </lineage>
</organism>
<feature type="chain" id="PRO_1000134870" description="4-hydroxy-tetrahydrodipicolinate synthase">
    <location>
        <begin position="1"/>
        <end position="293"/>
    </location>
</feature>
<feature type="active site" description="Proton donor/acceptor" evidence="1">
    <location>
        <position position="136"/>
    </location>
</feature>
<feature type="active site" description="Schiff-base intermediate with substrate" evidence="1">
    <location>
        <position position="164"/>
    </location>
</feature>
<feature type="binding site" evidence="1">
    <location>
        <position position="47"/>
    </location>
    <ligand>
        <name>pyruvate</name>
        <dbReference type="ChEBI" id="CHEBI:15361"/>
    </ligand>
</feature>
<feature type="binding site" evidence="1">
    <location>
        <position position="206"/>
    </location>
    <ligand>
        <name>pyruvate</name>
        <dbReference type="ChEBI" id="CHEBI:15361"/>
    </ligand>
</feature>
<feature type="site" description="Part of a proton relay during catalysis" evidence="1">
    <location>
        <position position="46"/>
    </location>
</feature>
<feature type="site" description="Part of a proton relay during catalysis" evidence="1">
    <location>
        <position position="110"/>
    </location>
</feature>
<evidence type="ECO:0000255" key="1">
    <source>
        <dbReference type="HAMAP-Rule" id="MF_00418"/>
    </source>
</evidence>
<evidence type="ECO:0000305" key="2"/>
<name>DAPA_LISMH</name>
<sequence>MDLGKVITAMVTPIHPEKDKVCKKRIHHLVNHLIENGSDGLVIAGTTGESPTLSHDEKIKLFRQVIETNDGRAKLIAGTGSNNTAETIAFTKEVAELGGIDAVLIVAPYYNKPNQDGLYAHFAAVAEASDLPVVIYNIPGRSVVNIEPETIIRLAALPNIVGVKESSGNLDNISKIIAETSDDFQVYSGDDSLTLPILAVGGNGVISVASHVVGNEMQEMIQAFERGEVQKAAQIHRELLPLMNGLFSVPNPAPTKYLLNQQGISVGPVRLPLVDLNAEQGTKLQAILEGLSK</sequence>
<keyword id="KW-0028">Amino-acid biosynthesis</keyword>
<keyword id="KW-0963">Cytoplasm</keyword>
<keyword id="KW-0220">Diaminopimelate biosynthesis</keyword>
<keyword id="KW-0456">Lyase</keyword>
<keyword id="KW-0457">Lysine biosynthesis</keyword>
<keyword id="KW-0704">Schiff base</keyword>